<accession>B4T132</accession>
<dbReference type="EMBL" id="CP001113">
    <property type="protein sequence ID" value="ACF63185.1"/>
    <property type="molecule type" value="Genomic_DNA"/>
</dbReference>
<dbReference type="RefSeq" id="WP_000109271.1">
    <property type="nucleotide sequence ID" value="NZ_CCMR01000003.1"/>
</dbReference>
<dbReference type="SMR" id="B4T132"/>
<dbReference type="KEGG" id="see:SNSL254_A1001"/>
<dbReference type="HOGENOM" id="CLU_035018_1_2_6"/>
<dbReference type="Proteomes" id="UP000008824">
    <property type="component" value="Chromosome"/>
</dbReference>
<dbReference type="GO" id="GO:0005886">
    <property type="term" value="C:plasma membrane"/>
    <property type="evidence" value="ECO:0007669"/>
    <property type="project" value="UniProtKB-SubCell"/>
</dbReference>
<dbReference type="GO" id="GO:0022857">
    <property type="term" value="F:transmembrane transporter activity"/>
    <property type="evidence" value="ECO:0007669"/>
    <property type="project" value="UniProtKB-UniRule"/>
</dbReference>
<dbReference type="CDD" id="cd17477">
    <property type="entry name" value="MFS_YcaD_like"/>
    <property type="match status" value="1"/>
</dbReference>
<dbReference type="FunFam" id="1.20.1250.20:FF:000041">
    <property type="entry name" value="Uncharacterized MFS-type transporter YcaD"/>
    <property type="match status" value="1"/>
</dbReference>
<dbReference type="FunFam" id="1.20.1250.20:FF:000066">
    <property type="entry name" value="Uncharacterized MFS-type transporter YcaD"/>
    <property type="match status" value="1"/>
</dbReference>
<dbReference type="Gene3D" id="1.20.1250.20">
    <property type="entry name" value="MFS general substrate transporter like domains"/>
    <property type="match status" value="2"/>
</dbReference>
<dbReference type="HAMAP" id="MF_01149">
    <property type="entry name" value="MFS_YcaD"/>
    <property type="match status" value="1"/>
</dbReference>
<dbReference type="InterPro" id="IPR011701">
    <property type="entry name" value="MFS"/>
</dbReference>
<dbReference type="InterPro" id="IPR020846">
    <property type="entry name" value="MFS_dom"/>
</dbReference>
<dbReference type="InterPro" id="IPR036259">
    <property type="entry name" value="MFS_trans_sf"/>
</dbReference>
<dbReference type="InterPro" id="IPR023745">
    <property type="entry name" value="MFS_YcaD"/>
</dbReference>
<dbReference type="InterPro" id="IPR047200">
    <property type="entry name" value="MFS_YcaD-like"/>
</dbReference>
<dbReference type="NCBIfam" id="NF002962">
    <property type="entry name" value="PRK03633.1"/>
    <property type="match status" value="1"/>
</dbReference>
<dbReference type="PANTHER" id="PTHR23521">
    <property type="entry name" value="TRANSPORTER MFS SUPERFAMILY"/>
    <property type="match status" value="1"/>
</dbReference>
<dbReference type="PANTHER" id="PTHR23521:SF2">
    <property type="entry name" value="TRANSPORTER MFS SUPERFAMILY"/>
    <property type="match status" value="1"/>
</dbReference>
<dbReference type="Pfam" id="PF07690">
    <property type="entry name" value="MFS_1"/>
    <property type="match status" value="1"/>
</dbReference>
<dbReference type="SUPFAM" id="SSF103473">
    <property type="entry name" value="MFS general substrate transporter"/>
    <property type="match status" value="1"/>
</dbReference>
<dbReference type="PROSITE" id="PS50850">
    <property type="entry name" value="MFS"/>
    <property type="match status" value="1"/>
</dbReference>
<comment type="subcellular location">
    <subcellularLocation>
        <location evidence="1">Cell inner membrane</location>
        <topology evidence="1">Multi-pass membrane protein</topology>
    </subcellularLocation>
</comment>
<comment type="similarity">
    <text evidence="1">Belongs to the major facilitator superfamily. YcaD (TC 2.A.1.26) family.</text>
</comment>
<reference key="1">
    <citation type="journal article" date="2011" name="J. Bacteriol.">
        <title>Comparative genomics of 28 Salmonella enterica isolates: evidence for CRISPR-mediated adaptive sublineage evolution.</title>
        <authorList>
            <person name="Fricke W.F."/>
            <person name="Mammel M.K."/>
            <person name="McDermott P.F."/>
            <person name="Tartera C."/>
            <person name="White D.G."/>
            <person name="Leclerc J.E."/>
            <person name="Ravel J."/>
            <person name="Cebula T.A."/>
        </authorList>
    </citation>
    <scope>NUCLEOTIDE SEQUENCE [LARGE SCALE GENOMIC DNA]</scope>
    <source>
        <strain>SL254</strain>
    </source>
</reference>
<organism>
    <name type="scientific">Salmonella newport (strain SL254)</name>
    <dbReference type="NCBI Taxonomy" id="423368"/>
    <lineage>
        <taxon>Bacteria</taxon>
        <taxon>Pseudomonadati</taxon>
        <taxon>Pseudomonadota</taxon>
        <taxon>Gammaproteobacteria</taxon>
        <taxon>Enterobacterales</taxon>
        <taxon>Enterobacteriaceae</taxon>
        <taxon>Salmonella</taxon>
    </lineage>
</organism>
<keyword id="KW-0997">Cell inner membrane</keyword>
<keyword id="KW-1003">Cell membrane</keyword>
<keyword id="KW-0472">Membrane</keyword>
<keyword id="KW-0812">Transmembrane</keyword>
<keyword id="KW-1133">Transmembrane helix</keyword>
<keyword id="KW-0813">Transport</keyword>
<name>YCAD_SALNS</name>
<protein>
    <recommendedName>
        <fullName evidence="1">Uncharacterized MFS-type transporter YcaD</fullName>
    </recommendedName>
</protein>
<gene>
    <name evidence="1" type="primary">ycaD</name>
    <name type="ordered locus">SNSL254_A1001</name>
</gene>
<sequence length="382" mass="41548">MSTYTRPVMLLLCGLLLLTLAIAVLNTLVPLWLAQANLPTWQVGMVSSSYFTGNLVGTLFTGYLIKRIGFNRSYYLASLIFAAGCVGLGVMVGFWSWMSWRFIAGIGCAMIWVVVESALMCSGTSHNRGRLLAAYMMVYYMGTFLGQLLVSKVSGELLHVLPWVTGMILAGILPLLFTRIVNQQTQARHSSSISAMLKLRQARLGVNGCIISGIVLGSLYGLMPLYLKHQGMANASIGFWMAVLVSAGILGQWPMGRLADKFGRLLVLRVQVFVVILGSIAMLTQAAMAPALFILGAAGFTLYPVAMAWACEKVEHHQLVAMNQALLLSYTVGSLLGPSFAAMLMQNYSDNLLFIMIASVSFIYLLMLLRNAGQTPNPVAHI</sequence>
<proteinExistence type="inferred from homology"/>
<feature type="chain" id="PRO_1000137497" description="Uncharacterized MFS-type transporter YcaD">
    <location>
        <begin position="1"/>
        <end position="382"/>
    </location>
</feature>
<feature type="transmembrane region" description="Helical" evidence="1">
    <location>
        <begin position="8"/>
        <end position="28"/>
    </location>
</feature>
<feature type="transmembrane region" description="Helical" evidence="1">
    <location>
        <begin position="45"/>
        <end position="65"/>
    </location>
</feature>
<feature type="transmembrane region" description="Helical" evidence="1">
    <location>
        <begin position="75"/>
        <end position="95"/>
    </location>
</feature>
<feature type="transmembrane region" description="Helical" evidence="1">
    <location>
        <begin position="102"/>
        <end position="122"/>
    </location>
</feature>
<feature type="transmembrane region" description="Helical" evidence="1">
    <location>
        <begin position="131"/>
        <end position="151"/>
    </location>
</feature>
<feature type="transmembrane region" description="Helical" evidence="1">
    <location>
        <begin position="157"/>
        <end position="177"/>
    </location>
</feature>
<feature type="transmembrane region" description="Helical" evidence="1">
    <location>
        <begin position="204"/>
        <end position="224"/>
    </location>
</feature>
<feature type="transmembrane region" description="Helical" evidence="1">
    <location>
        <begin position="231"/>
        <end position="251"/>
    </location>
</feature>
<feature type="transmembrane region" description="Helical" evidence="1">
    <location>
        <begin position="270"/>
        <end position="290"/>
    </location>
</feature>
<feature type="transmembrane region" description="Helical" evidence="1">
    <location>
        <begin position="291"/>
        <end position="311"/>
    </location>
</feature>
<feature type="transmembrane region" description="Helical" evidence="1">
    <location>
        <begin position="325"/>
        <end position="345"/>
    </location>
</feature>
<feature type="transmembrane region" description="Helical" evidence="1">
    <location>
        <begin position="349"/>
        <end position="369"/>
    </location>
</feature>
<evidence type="ECO:0000255" key="1">
    <source>
        <dbReference type="HAMAP-Rule" id="MF_01149"/>
    </source>
</evidence>